<keyword id="KW-0028">Amino-acid biosynthesis</keyword>
<keyword id="KW-0055">Arginine biosynthesis</keyword>
<keyword id="KW-0067">ATP-binding</keyword>
<keyword id="KW-0315">Glutamine amidotransferase</keyword>
<keyword id="KW-0436">Ligase</keyword>
<keyword id="KW-0547">Nucleotide-binding</keyword>
<keyword id="KW-0665">Pyrimidine biosynthesis</keyword>
<keyword id="KW-1185">Reference proteome</keyword>
<evidence type="ECO:0000255" key="1">
    <source>
        <dbReference type="HAMAP-Rule" id="MF_01209"/>
    </source>
</evidence>
<accession>Q6D0C8</accession>
<name>CARA_PECAS</name>
<dbReference type="EC" id="6.3.5.5" evidence="1"/>
<dbReference type="EMBL" id="BX950851">
    <property type="protein sequence ID" value="CAG76769.1"/>
    <property type="molecule type" value="Genomic_DNA"/>
</dbReference>
<dbReference type="RefSeq" id="WP_011095369.1">
    <property type="nucleotide sequence ID" value="NC_004547.2"/>
</dbReference>
<dbReference type="SMR" id="Q6D0C8"/>
<dbReference type="STRING" id="218491.ECA3871"/>
<dbReference type="MEROPS" id="C26.954"/>
<dbReference type="KEGG" id="eca:ECA3871"/>
<dbReference type="PATRIC" id="fig|218491.5.peg.3927"/>
<dbReference type="eggNOG" id="COG0505">
    <property type="taxonomic scope" value="Bacteria"/>
</dbReference>
<dbReference type="HOGENOM" id="CLU_035901_2_1_6"/>
<dbReference type="OrthoDB" id="9804328at2"/>
<dbReference type="UniPathway" id="UPA00068">
    <property type="reaction ID" value="UER00171"/>
</dbReference>
<dbReference type="UniPathway" id="UPA00070">
    <property type="reaction ID" value="UER00115"/>
</dbReference>
<dbReference type="Proteomes" id="UP000007966">
    <property type="component" value="Chromosome"/>
</dbReference>
<dbReference type="GO" id="GO:0005524">
    <property type="term" value="F:ATP binding"/>
    <property type="evidence" value="ECO:0007669"/>
    <property type="project" value="UniProtKB-UniRule"/>
</dbReference>
<dbReference type="GO" id="GO:0004088">
    <property type="term" value="F:carbamoyl-phosphate synthase (glutamine-hydrolyzing) activity"/>
    <property type="evidence" value="ECO:0007669"/>
    <property type="project" value="UniProtKB-UniRule"/>
</dbReference>
<dbReference type="GO" id="GO:0004359">
    <property type="term" value="F:glutaminase activity"/>
    <property type="evidence" value="ECO:0007669"/>
    <property type="project" value="RHEA"/>
</dbReference>
<dbReference type="GO" id="GO:0006207">
    <property type="term" value="P:'de novo' pyrimidine nucleobase biosynthetic process"/>
    <property type="evidence" value="ECO:0007669"/>
    <property type="project" value="InterPro"/>
</dbReference>
<dbReference type="GO" id="GO:0044205">
    <property type="term" value="P:'de novo' UMP biosynthetic process"/>
    <property type="evidence" value="ECO:0007669"/>
    <property type="project" value="UniProtKB-UniRule"/>
</dbReference>
<dbReference type="GO" id="GO:0006541">
    <property type="term" value="P:glutamine metabolic process"/>
    <property type="evidence" value="ECO:0007669"/>
    <property type="project" value="InterPro"/>
</dbReference>
<dbReference type="GO" id="GO:0006526">
    <property type="term" value="P:L-arginine biosynthetic process"/>
    <property type="evidence" value="ECO:0007669"/>
    <property type="project" value="UniProtKB-UniRule"/>
</dbReference>
<dbReference type="CDD" id="cd01744">
    <property type="entry name" value="GATase1_CPSase"/>
    <property type="match status" value="1"/>
</dbReference>
<dbReference type="FunFam" id="3.40.50.880:FF:000011">
    <property type="entry name" value="Carbamoyl-phosphate synthase small chain"/>
    <property type="match status" value="1"/>
</dbReference>
<dbReference type="FunFam" id="3.50.30.20:FF:000001">
    <property type="entry name" value="Carbamoyl-phosphate synthase small chain"/>
    <property type="match status" value="1"/>
</dbReference>
<dbReference type="Gene3D" id="3.40.50.880">
    <property type="match status" value="1"/>
</dbReference>
<dbReference type="Gene3D" id="3.50.30.20">
    <property type="entry name" value="Carbamoyl-phosphate synthase small subunit, N-terminal domain"/>
    <property type="match status" value="1"/>
</dbReference>
<dbReference type="HAMAP" id="MF_01209">
    <property type="entry name" value="CPSase_S_chain"/>
    <property type="match status" value="1"/>
</dbReference>
<dbReference type="InterPro" id="IPR050472">
    <property type="entry name" value="Anth_synth/Amidotransfase"/>
</dbReference>
<dbReference type="InterPro" id="IPR006274">
    <property type="entry name" value="CarbamoylP_synth_ssu"/>
</dbReference>
<dbReference type="InterPro" id="IPR002474">
    <property type="entry name" value="CarbamoylP_synth_ssu_N"/>
</dbReference>
<dbReference type="InterPro" id="IPR036480">
    <property type="entry name" value="CarbP_synth_ssu_N_sf"/>
</dbReference>
<dbReference type="InterPro" id="IPR029062">
    <property type="entry name" value="Class_I_gatase-like"/>
</dbReference>
<dbReference type="InterPro" id="IPR035686">
    <property type="entry name" value="CPSase_GATase1"/>
</dbReference>
<dbReference type="InterPro" id="IPR017926">
    <property type="entry name" value="GATASE"/>
</dbReference>
<dbReference type="NCBIfam" id="TIGR01368">
    <property type="entry name" value="CPSaseIIsmall"/>
    <property type="match status" value="1"/>
</dbReference>
<dbReference type="NCBIfam" id="NF009475">
    <property type="entry name" value="PRK12838.1"/>
    <property type="match status" value="1"/>
</dbReference>
<dbReference type="PANTHER" id="PTHR43418:SF7">
    <property type="entry name" value="CARBAMOYL-PHOSPHATE SYNTHASE SMALL CHAIN"/>
    <property type="match status" value="1"/>
</dbReference>
<dbReference type="PANTHER" id="PTHR43418">
    <property type="entry name" value="MULTIFUNCTIONAL TRYPTOPHAN BIOSYNTHESIS PROTEIN-RELATED"/>
    <property type="match status" value="1"/>
</dbReference>
<dbReference type="Pfam" id="PF00988">
    <property type="entry name" value="CPSase_sm_chain"/>
    <property type="match status" value="1"/>
</dbReference>
<dbReference type="Pfam" id="PF00117">
    <property type="entry name" value="GATase"/>
    <property type="match status" value="1"/>
</dbReference>
<dbReference type="PRINTS" id="PR00097">
    <property type="entry name" value="ANTSNTHASEII"/>
</dbReference>
<dbReference type="PRINTS" id="PR00099">
    <property type="entry name" value="CPSGATASE"/>
</dbReference>
<dbReference type="PRINTS" id="PR00096">
    <property type="entry name" value="GATASE"/>
</dbReference>
<dbReference type="SMART" id="SM01097">
    <property type="entry name" value="CPSase_sm_chain"/>
    <property type="match status" value="1"/>
</dbReference>
<dbReference type="SUPFAM" id="SSF52021">
    <property type="entry name" value="Carbamoyl phosphate synthetase, small subunit N-terminal domain"/>
    <property type="match status" value="1"/>
</dbReference>
<dbReference type="SUPFAM" id="SSF52317">
    <property type="entry name" value="Class I glutamine amidotransferase-like"/>
    <property type="match status" value="1"/>
</dbReference>
<dbReference type="PROSITE" id="PS51273">
    <property type="entry name" value="GATASE_TYPE_1"/>
    <property type="match status" value="1"/>
</dbReference>
<reference key="1">
    <citation type="journal article" date="2004" name="Proc. Natl. Acad. Sci. U.S.A.">
        <title>Genome sequence of the enterobacterial phytopathogen Erwinia carotovora subsp. atroseptica and characterization of virulence factors.</title>
        <authorList>
            <person name="Bell K.S."/>
            <person name="Sebaihia M."/>
            <person name="Pritchard L."/>
            <person name="Holden M.T.G."/>
            <person name="Hyman L.J."/>
            <person name="Holeva M.C."/>
            <person name="Thomson N.R."/>
            <person name="Bentley S.D."/>
            <person name="Churcher L.J.C."/>
            <person name="Mungall K."/>
            <person name="Atkin R."/>
            <person name="Bason N."/>
            <person name="Brooks K."/>
            <person name="Chillingworth T."/>
            <person name="Clark K."/>
            <person name="Doggett J."/>
            <person name="Fraser A."/>
            <person name="Hance Z."/>
            <person name="Hauser H."/>
            <person name="Jagels K."/>
            <person name="Moule S."/>
            <person name="Norbertczak H."/>
            <person name="Ormond D."/>
            <person name="Price C."/>
            <person name="Quail M.A."/>
            <person name="Sanders M."/>
            <person name="Walker D."/>
            <person name="Whitehead S."/>
            <person name="Salmond G.P.C."/>
            <person name="Birch P.R.J."/>
            <person name="Parkhill J."/>
            <person name="Toth I.K."/>
        </authorList>
    </citation>
    <scope>NUCLEOTIDE SEQUENCE [LARGE SCALE GENOMIC DNA]</scope>
    <source>
        <strain>SCRI 1043 / ATCC BAA-672</strain>
    </source>
</reference>
<comment type="function">
    <text evidence="1">Small subunit of the glutamine-dependent carbamoyl phosphate synthetase (CPSase). CPSase catalyzes the formation of carbamoyl phosphate from the ammonia moiety of glutamine, carbonate, and phosphate donated by ATP, constituting the first step of 2 biosynthetic pathways, one leading to arginine and/or urea and the other to pyrimidine nucleotides. The small subunit (glutamine amidotransferase) binds and cleaves glutamine to supply the large subunit with the substrate ammonia.</text>
</comment>
<comment type="catalytic activity">
    <reaction evidence="1">
        <text>hydrogencarbonate + L-glutamine + 2 ATP + H2O = carbamoyl phosphate + L-glutamate + 2 ADP + phosphate + 2 H(+)</text>
        <dbReference type="Rhea" id="RHEA:18633"/>
        <dbReference type="ChEBI" id="CHEBI:15377"/>
        <dbReference type="ChEBI" id="CHEBI:15378"/>
        <dbReference type="ChEBI" id="CHEBI:17544"/>
        <dbReference type="ChEBI" id="CHEBI:29985"/>
        <dbReference type="ChEBI" id="CHEBI:30616"/>
        <dbReference type="ChEBI" id="CHEBI:43474"/>
        <dbReference type="ChEBI" id="CHEBI:58228"/>
        <dbReference type="ChEBI" id="CHEBI:58359"/>
        <dbReference type="ChEBI" id="CHEBI:456216"/>
        <dbReference type="EC" id="6.3.5.5"/>
    </reaction>
</comment>
<comment type="catalytic activity">
    <molecule>Carbamoyl phosphate synthase small chain</molecule>
    <reaction evidence="1">
        <text>L-glutamine + H2O = L-glutamate + NH4(+)</text>
        <dbReference type="Rhea" id="RHEA:15889"/>
        <dbReference type="ChEBI" id="CHEBI:15377"/>
        <dbReference type="ChEBI" id="CHEBI:28938"/>
        <dbReference type="ChEBI" id="CHEBI:29985"/>
        <dbReference type="ChEBI" id="CHEBI:58359"/>
    </reaction>
</comment>
<comment type="pathway">
    <text evidence="1">Amino-acid biosynthesis; L-arginine biosynthesis; carbamoyl phosphate from bicarbonate: step 1/1.</text>
</comment>
<comment type="pathway">
    <text evidence="1">Pyrimidine metabolism; UMP biosynthesis via de novo pathway; (S)-dihydroorotate from bicarbonate: step 1/3.</text>
</comment>
<comment type="subunit">
    <text evidence="1">Composed of two chains; the small (or glutamine) chain promotes the hydrolysis of glutamine to ammonia, which is used by the large (or ammonia) chain to synthesize carbamoyl phosphate. Tetramer of heterodimers (alpha,beta)4.</text>
</comment>
<comment type="similarity">
    <text evidence="1">Belongs to the CarA family.</text>
</comment>
<gene>
    <name evidence="1" type="primary">carA</name>
    <name type="ordered locus">ECA3871</name>
</gene>
<proteinExistence type="inferred from homology"/>
<protein>
    <recommendedName>
        <fullName evidence="1">Carbamoyl phosphate synthase small chain</fullName>
        <ecNumber evidence="1">6.3.5.5</ecNumber>
    </recommendedName>
    <alternativeName>
        <fullName evidence="1">Carbamoyl phosphate synthetase glutamine chain</fullName>
    </alternativeName>
</protein>
<organism>
    <name type="scientific">Pectobacterium atrosepticum (strain SCRI 1043 / ATCC BAA-672)</name>
    <name type="common">Erwinia carotovora subsp. atroseptica</name>
    <dbReference type="NCBI Taxonomy" id="218491"/>
    <lineage>
        <taxon>Bacteria</taxon>
        <taxon>Pseudomonadati</taxon>
        <taxon>Pseudomonadota</taxon>
        <taxon>Gammaproteobacteria</taxon>
        <taxon>Enterobacterales</taxon>
        <taxon>Pectobacteriaceae</taxon>
        <taxon>Pectobacterium</taxon>
    </lineage>
</organism>
<feature type="chain" id="PRO_0000112277" description="Carbamoyl phosphate synthase small chain">
    <location>
        <begin position="1"/>
        <end position="382"/>
    </location>
</feature>
<feature type="domain" description="Glutamine amidotransferase type-1" evidence="1">
    <location>
        <begin position="193"/>
        <end position="380"/>
    </location>
</feature>
<feature type="region of interest" description="CPSase" evidence="1">
    <location>
        <begin position="1"/>
        <end position="189"/>
    </location>
</feature>
<feature type="active site" description="Nucleophile" evidence="1">
    <location>
        <position position="269"/>
    </location>
</feature>
<feature type="active site" evidence="1">
    <location>
        <position position="353"/>
    </location>
</feature>
<feature type="active site" evidence="1">
    <location>
        <position position="355"/>
    </location>
</feature>
<feature type="binding site" evidence="1">
    <location>
        <position position="47"/>
    </location>
    <ligand>
        <name>L-glutamine</name>
        <dbReference type="ChEBI" id="CHEBI:58359"/>
    </ligand>
</feature>
<feature type="binding site" evidence="1">
    <location>
        <position position="241"/>
    </location>
    <ligand>
        <name>L-glutamine</name>
        <dbReference type="ChEBI" id="CHEBI:58359"/>
    </ligand>
</feature>
<feature type="binding site" evidence="1">
    <location>
        <position position="243"/>
    </location>
    <ligand>
        <name>L-glutamine</name>
        <dbReference type="ChEBI" id="CHEBI:58359"/>
    </ligand>
</feature>
<feature type="binding site" evidence="1">
    <location>
        <position position="270"/>
    </location>
    <ligand>
        <name>L-glutamine</name>
        <dbReference type="ChEBI" id="CHEBI:58359"/>
    </ligand>
</feature>
<feature type="binding site" evidence="1">
    <location>
        <position position="273"/>
    </location>
    <ligand>
        <name>L-glutamine</name>
        <dbReference type="ChEBI" id="CHEBI:58359"/>
    </ligand>
</feature>
<feature type="binding site" evidence="1">
    <location>
        <position position="311"/>
    </location>
    <ligand>
        <name>L-glutamine</name>
        <dbReference type="ChEBI" id="CHEBI:58359"/>
    </ligand>
</feature>
<feature type="binding site" evidence="1">
    <location>
        <position position="313"/>
    </location>
    <ligand>
        <name>L-glutamine</name>
        <dbReference type="ChEBI" id="CHEBI:58359"/>
    </ligand>
</feature>
<feature type="binding site" evidence="1">
    <location>
        <position position="314"/>
    </location>
    <ligand>
        <name>L-glutamine</name>
        <dbReference type="ChEBI" id="CHEBI:58359"/>
    </ligand>
</feature>
<sequence>MIKSALLVLEDGTQFHGRAIGAEGLAVGEVVFNTSMTGYQEILTDPSYSRQIVTLTYPHIGNVGANANDEESPSVQAQGLVIRDLPLIASNYRSEESLSEYLKRNNIVAIADIDTRKLTRLLREKGAQNGCIIAGDAPDAVVALEKAKAFPGLKGMDLAKEVTTAESYSWLQGSWTLEGELPAAKNESELPYHVVAYDYGVKRNILRMLVDRGCRLTVVPAQTPAEDVLKLNPDGIFLSNGPGDPEPCDYAIRAIKTFLETGIPVFGICLGHQLLALASGAKTTKMKLGHHGGNHPVKDLDNNCVMITAQNHGFAVDEDNLPDTLRVTHKSLFDHTVQGIHRTDKPAFSFQGHPEASPGPHDAAPLFDHFIDLIQTYRSSAK</sequence>